<dbReference type="EC" id="3.5.1.88" evidence="1"/>
<dbReference type="EMBL" id="CP000481">
    <property type="protein sequence ID" value="ABK53051.1"/>
    <property type="molecule type" value="Genomic_DNA"/>
</dbReference>
<dbReference type="RefSeq" id="WP_011720114.1">
    <property type="nucleotide sequence ID" value="NC_008578.1"/>
</dbReference>
<dbReference type="SMR" id="A0LUE1"/>
<dbReference type="FunCoup" id="A0LUE1">
    <property type="interactions" value="173"/>
</dbReference>
<dbReference type="STRING" id="351607.Acel_1279"/>
<dbReference type="KEGG" id="ace:Acel_1279"/>
<dbReference type="eggNOG" id="COG0242">
    <property type="taxonomic scope" value="Bacteria"/>
</dbReference>
<dbReference type="HOGENOM" id="CLU_061901_1_2_11"/>
<dbReference type="InParanoid" id="A0LUE1"/>
<dbReference type="OrthoDB" id="9804313at2"/>
<dbReference type="Proteomes" id="UP000008221">
    <property type="component" value="Chromosome"/>
</dbReference>
<dbReference type="GO" id="GO:0046872">
    <property type="term" value="F:metal ion binding"/>
    <property type="evidence" value="ECO:0007669"/>
    <property type="project" value="UniProtKB-KW"/>
</dbReference>
<dbReference type="GO" id="GO:0042586">
    <property type="term" value="F:peptide deformylase activity"/>
    <property type="evidence" value="ECO:0007669"/>
    <property type="project" value="UniProtKB-UniRule"/>
</dbReference>
<dbReference type="GO" id="GO:0043686">
    <property type="term" value="P:co-translational protein modification"/>
    <property type="evidence" value="ECO:0007669"/>
    <property type="project" value="TreeGrafter"/>
</dbReference>
<dbReference type="GO" id="GO:0006412">
    <property type="term" value="P:translation"/>
    <property type="evidence" value="ECO:0007669"/>
    <property type="project" value="UniProtKB-UniRule"/>
</dbReference>
<dbReference type="CDD" id="cd00487">
    <property type="entry name" value="Pep_deformylase"/>
    <property type="match status" value="1"/>
</dbReference>
<dbReference type="Gene3D" id="3.90.45.10">
    <property type="entry name" value="Peptide deformylase"/>
    <property type="match status" value="1"/>
</dbReference>
<dbReference type="HAMAP" id="MF_00163">
    <property type="entry name" value="Pep_deformylase"/>
    <property type="match status" value="1"/>
</dbReference>
<dbReference type="InterPro" id="IPR023635">
    <property type="entry name" value="Peptide_deformylase"/>
</dbReference>
<dbReference type="InterPro" id="IPR036821">
    <property type="entry name" value="Peptide_deformylase_sf"/>
</dbReference>
<dbReference type="NCBIfam" id="TIGR00079">
    <property type="entry name" value="pept_deformyl"/>
    <property type="match status" value="1"/>
</dbReference>
<dbReference type="NCBIfam" id="NF001159">
    <property type="entry name" value="PRK00150.1-3"/>
    <property type="match status" value="1"/>
</dbReference>
<dbReference type="PANTHER" id="PTHR10458">
    <property type="entry name" value="PEPTIDE DEFORMYLASE"/>
    <property type="match status" value="1"/>
</dbReference>
<dbReference type="PANTHER" id="PTHR10458:SF2">
    <property type="entry name" value="PEPTIDE DEFORMYLASE, MITOCHONDRIAL"/>
    <property type="match status" value="1"/>
</dbReference>
<dbReference type="Pfam" id="PF01327">
    <property type="entry name" value="Pep_deformylase"/>
    <property type="match status" value="1"/>
</dbReference>
<dbReference type="PIRSF" id="PIRSF004749">
    <property type="entry name" value="Pep_def"/>
    <property type="match status" value="1"/>
</dbReference>
<dbReference type="PRINTS" id="PR01576">
    <property type="entry name" value="PDEFORMYLASE"/>
</dbReference>
<dbReference type="SUPFAM" id="SSF56420">
    <property type="entry name" value="Peptide deformylase"/>
    <property type="match status" value="1"/>
</dbReference>
<gene>
    <name evidence="1" type="primary">def</name>
    <name type="ordered locus">Acel_1279</name>
</gene>
<comment type="function">
    <text evidence="1">Removes the formyl group from the N-terminal Met of newly synthesized proteins. Requires at least a dipeptide for an efficient rate of reaction. N-terminal L-methionine is a prerequisite for activity but the enzyme has broad specificity at other positions.</text>
</comment>
<comment type="catalytic activity">
    <reaction evidence="1">
        <text>N-terminal N-formyl-L-methionyl-[peptide] + H2O = N-terminal L-methionyl-[peptide] + formate</text>
        <dbReference type="Rhea" id="RHEA:24420"/>
        <dbReference type="Rhea" id="RHEA-COMP:10639"/>
        <dbReference type="Rhea" id="RHEA-COMP:10640"/>
        <dbReference type="ChEBI" id="CHEBI:15377"/>
        <dbReference type="ChEBI" id="CHEBI:15740"/>
        <dbReference type="ChEBI" id="CHEBI:49298"/>
        <dbReference type="ChEBI" id="CHEBI:64731"/>
        <dbReference type="EC" id="3.5.1.88"/>
    </reaction>
</comment>
<comment type="cofactor">
    <cofactor evidence="1">
        <name>Fe(2+)</name>
        <dbReference type="ChEBI" id="CHEBI:29033"/>
    </cofactor>
    <text evidence="1">Binds 1 Fe(2+) ion.</text>
</comment>
<comment type="similarity">
    <text evidence="1">Belongs to the polypeptide deformylase family.</text>
</comment>
<reference key="1">
    <citation type="journal article" date="2009" name="Genome Res.">
        <title>Complete genome of the cellulolytic thermophile Acidothermus cellulolyticus 11B provides insights into its ecophysiological and evolutionary adaptations.</title>
        <authorList>
            <person name="Barabote R.D."/>
            <person name="Xie G."/>
            <person name="Leu D.H."/>
            <person name="Normand P."/>
            <person name="Necsulea A."/>
            <person name="Daubin V."/>
            <person name="Medigue C."/>
            <person name="Adney W.S."/>
            <person name="Xu X.C."/>
            <person name="Lapidus A."/>
            <person name="Parales R.E."/>
            <person name="Detter C."/>
            <person name="Pujic P."/>
            <person name="Bruce D."/>
            <person name="Lavire C."/>
            <person name="Challacombe J.F."/>
            <person name="Brettin T.S."/>
            <person name="Berry A.M."/>
        </authorList>
    </citation>
    <scope>NUCLEOTIDE SEQUENCE [LARGE SCALE GENOMIC DNA]</scope>
    <source>
        <strain>ATCC 43068 / DSM 8971 / 11B</strain>
    </source>
</reference>
<keyword id="KW-0378">Hydrolase</keyword>
<keyword id="KW-0408">Iron</keyword>
<keyword id="KW-0479">Metal-binding</keyword>
<keyword id="KW-0648">Protein biosynthesis</keyword>
<keyword id="KW-1185">Reference proteome</keyword>
<evidence type="ECO:0000255" key="1">
    <source>
        <dbReference type="HAMAP-Rule" id="MF_00163"/>
    </source>
</evidence>
<organism>
    <name type="scientific">Acidothermus cellulolyticus (strain ATCC 43068 / DSM 8971 / 11B)</name>
    <dbReference type="NCBI Taxonomy" id="351607"/>
    <lineage>
        <taxon>Bacteria</taxon>
        <taxon>Bacillati</taxon>
        <taxon>Actinomycetota</taxon>
        <taxon>Actinomycetes</taxon>
        <taxon>Acidothermales</taxon>
        <taxon>Acidothermaceae</taxon>
        <taxon>Acidothermus</taxon>
    </lineage>
</organism>
<proteinExistence type="inferred from homology"/>
<protein>
    <recommendedName>
        <fullName evidence="1">Peptide deformylase</fullName>
        <shortName evidence="1">PDF</shortName>
        <ecNumber evidence="1">3.5.1.88</ecNumber>
    </recommendedName>
    <alternativeName>
        <fullName evidence="1">Polypeptide deformylase</fullName>
    </alternativeName>
</protein>
<feature type="chain" id="PRO_0000300998" description="Peptide deformylase">
    <location>
        <begin position="1"/>
        <end position="180"/>
    </location>
</feature>
<feature type="active site" evidence="1">
    <location>
        <position position="131"/>
    </location>
</feature>
<feature type="binding site" evidence="1">
    <location>
        <position position="88"/>
    </location>
    <ligand>
        <name>Fe cation</name>
        <dbReference type="ChEBI" id="CHEBI:24875"/>
    </ligand>
</feature>
<feature type="binding site" evidence="1">
    <location>
        <position position="130"/>
    </location>
    <ligand>
        <name>Fe cation</name>
        <dbReference type="ChEBI" id="CHEBI:24875"/>
    </ligand>
</feature>
<feature type="binding site" evidence="1">
    <location>
        <position position="134"/>
    </location>
    <ligand>
        <name>Fe cation</name>
        <dbReference type="ChEBI" id="CHEBI:24875"/>
    </ligand>
</feature>
<name>DEF_ACIC1</name>
<accession>A0LUE1</accession>
<sequence>MAVRPIRLFGDPVLRTPAEPVTDFDKELRVLIKDLIETMQDAPGVGLAAPQIGVSLRVFVYDVDGVVGHLVNPSLDLSEEQQDGDEGCLSLPGLSYPLKRAKRAVAKGFNEFGEPVILEGSDLLARCVQHETDHLDGVLFIDRLDPEQRKLAMRAIREAEWAGQTVRVKTSPHPTRGKAL</sequence>